<dbReference type="EMBL" id="CP001147">
    <property type="protein sequence ID" value="ACI20233.1"/>
    <property type="molecule type" value="Genomic_DNA"/>
</dbReference>
<dbReference type="RefSeq" id="WP_012544971.1">
    <property type="nucleotide sequence ID" value="NC_011296.1"/>
</dbReference>
<dbReference type="RefSeq" id="YP_002249237.1">
    <property type="nucleotide sequence ID" value="NC_011296.1"/>
</dbReference>
<dbReference type="SMR" id="B5YG39"/>
<dbReference type="FunCoup" id="B5YG39">
    <property type="interactions" value="390"/>
</dbReference>
<dbReference type="STRING" id="289376.THEYE_A1438"/>
<dbReference type="EnsemblBacteria" id="ACI20233">
    <property type="protein sequence ID" value="ACI20233"/>
    <property type="gene ID" value="THEYE_A1438"/>
</dbReference>
<dbReference type="KEGG" id="tye:THEYE_A1438"/>
<dbReference type="PATRIC" id="fig|289376.4.peg.1399"/>
<dbReference type="eggNOG" id="COG0255">
    <property type="taxonomic scope" value="Bacteria"/>
</dbReference>
<dbReference type="HOGENOM" id="CLU_158491_5_2_0"/>
<dbReference type="InParanoid" id="B5YG39"/>
<dbReference type="OrthoDB" id="9815192at2"/>
<dbReference type="Proteomes" id="UP000000718">
    <property type="component" value="Chromosome"/>
</dbReference>
<dbReference type="GO" id="GO:0022625">
    <property type="term" value="C:cytosolic large ribosomal subunit"/>
    <property type="evidence" value="ECO:0000318"/>
    <property type="project" value="GO_Central"/>
</dbReference>
<dbReference type="GO" id="GO:0003735">
    <property type="term" value="F:structural constituent of ribosome"/>
    <property type="evidence" value="ECO:0007669"/>
    <property type="project" value="InterPro"/>
</dbReference>
<dbReference type="GO" id="GO:0006412">
    <property type="term" value="P:translation"/>
    <property type="evidence" value="ECO:0007669"/>
    <property type="project" value="UniProtKB-UniRule"/>
</dbReference>
<dbReference type="CDD" id="cd00427">
    <property type="entry name" value="Ribosomal_L29_HIP"/>
    <property type="match status" value="1"/>
</dbReference>
<dbReference type="FunFam" id="1.10.287.310:FF:000001">
    <property type="entry name" value="50S ribosomal protein L29"/>
    <property type="match status" value="1"/>
</dbReference>
<dbReference type="Gene3D" id="1.10.287.310">
    <property type="match status" value="1"/>
</dbReference>
<dbReference type="HAMAP" id="MF_00374">
    <property type="entry name" value="Ribosomal_uL29"/>
    <property type="match status" value="1"/>
</dbReference>
<dbReference type="InterPro" id="IPR050063">
    <property type="entry name" value="Ribosomal_protein_uL29"/>
</dbReference>
<dbReference type="InterPro" id="IPR001854">
    <property type="entry name" value="Ribosomal_uL29"/>
</dbReference>
<dbReference type="InterPro" id="IPR036049">
    <property type="entry name" value="Ribosomal_uL29_sf"/>
</dbReference>
<dbReference type="NCBIfam" id="TIGR00012">
    <property type="entry name" value="L29"/>
    <property type="match status" value="1"/>
</dbReference>
<dbReference type="PANTHER" id="PTHR10916">
    <property type="entry name" value="60S RIBOSOMAL PROTEIN L35/50S RIBOSOMAL PROTEIN L29"/>
    <property type="match status" value="1"/>
</dbReference>
<dbReference type="PANTHER" id="PTHR10916:SF0">
    <property type="entry name" value="LARGE RIBOSOMAL SUBUNIT PROTEIN UL29C"/>
    <property type="match status" value="1"/>
</dbReference>
<dbReference type="Pfam" id="PF00831">
    <property type="entry name" value="Ribosomal_L29"/>
    <property type="match status" value="1"/>
</dbReference>
<dbReference type="SUPFAM" id="SSF46561">
    <property type="entry name" value="Ribosomal protein L29 (L29p)"/>
    <property type="match status" value="1"/>
</dbReference>
<organism>
    <name type="scientific">Thermodesulfovibrio yellowstonii (strain ATCC 51303 / DSM 11347 / YP87)</name>
    <dbReference type="NCBI Taxonomy" id="289376"/>
    <lineage>
        <taxon>Bacteria</taxon>
        <taxon>Pseudomonadati</taxon>
        <taxon>Nitrospirota</taxon>
        <taxon>Thermodesulfovibrionia</taxon>
        <taxon>Thermodesulfovibrionales</taxon>
        <taxon>Thermodesulfovibrionaceae</taxon>
        <taxon>Thermodesulfovibrio</taxon>
    </lineage>
</organism>
<keyword id="KW-1185">Reference proteome</keyword>
<keyword id="KW-0687">Ribonucleoprotein</keyword>
<keyword id="KW-0689">Ribosomal protein</keyword>
<comment type="similarity">
    <text evidence="1">Belongs to the universal ribosomal protein uL29 family.</text>
</comment>
<feature type="chain" id="PRO_1000121834" description="Large ribosomal subunit protein uL29">
    <location>
        <begin position="1"/>
        <end position="72"/>
    </location>
</feature>
<gene>
    <name evidence="1" type="primary">rpmC</name>
    <name type="ordered locus">THEYE_A1438</name>
</gene>
<name>RL29_THEYD</name>
<sequence>MKATELRNFSIEELRKKEKELRRELFNLRFQLAKGELQNVKRMKAVKKDIARILTIITEKTMMSSKGEAHKN</sequence>
<evidence type="ECO:0000255" key="1">
    <source>
        <dbReference type="HAMAP-Rule" id="MF_00374"/>
    </source>
</evidence>
<evidence type="ECO:0000305" key="2"/>
<accession>B5YG39</accession>
<proteinExistence type="inferred from homology"/>
<protein>
    <recommendedName>
        <fullName evidence="1">Large ribosomal subunit protein uL29</fullName>
    </recommendedName>
    <alternativeName>
        <fullName evidence="2">50S ribosomal protein L29</fullName>
    </alternativeName>
</protein>
<reference key="1">
    <citation type="submission" date="2008-08" db="EMBL/GenBank/DDBJ databases">
        <title>The complete genome sequence of Thermodesulfovibrio yellowstonii strain ATCC 51303 / DSM 11347 / YP87.</title>
        <authorList>
            <person name="Dodson R.J."/>
            <person name="Durkin A.S."/>
            <person name="Wu M."/>
            <person name="Eisen J."/>
            <person name="Sutton G."/>
        </authorList>
    </citation>
    <scope>NUCLEOTIDE SEQUENCE [LARGE SCALE GENOMIC DNA]</scope>
    <source>
        <strain>ATCC 51303 / DSM 11347 / YP87</strain>
    </source>
</reference>